<comment type="function">
    <text evidence="1">Catalyzes the attachment of L-aspartate to tRNA(Asp) in a two-step reaction: L-aspartate is first activated by ATP to form Asp-AMP and then transferred to the acceptor end of tRNA(Asp).</text>
</comment>
<comment type="catalytic activity">
    <reaction evidence="1">
        <text>tRNA(Asp) + L-aspartate + ATP = L-aspartyl-tRNA(Asp) + AMP + diphosphate</text>
        <dbReference type="Rhea" id="RHEA:19649"/>
        <dbReference type="Rhea" id="RHEA-COMP:9660"/>
        <dbReference type="Rhea" id="RHEA-COMP:9678"/>
        <dbReference type="ChEBI" id="CHEBI:29991"/>
        <dbReference type="ChEBI" id="CHEBI:30616"/>
        <dbReference type="ChEBI" id="CHEBI:33019"/>
        <dbReference type="ChEBI" id="CHEBI:78442"/>
        <dbReference type="ChEBI" id="CHEBI:78516"/>
        <dbReference type="ChEBI" id="CHEBI:456215"/>
        <dbReference type="EC" id="6.1.1.12"/>
    </reaction>
</comment>
<comment type="subunit">
    <text evidence="1">Homodimer.</text>
</comment>
<comment type="subcellular location">
    <subcellularLocation>
        <location evidence="1">Cytoplasm</location>
    </subcellularLocation>
</comment>
<comment type="similarity">
    <text evidence="1">Belongs to the class-II aminoacyl-tRNA synthetase family. Type 1 subfamily.</text>
</comment>
<protein>
    <recommendedName>
        <fullName evidence="1">Aspartate--tRNA ligase</fullName>
        <ecNumber evidence="1">6.1.1.12</ecNumber>
    </recommendedName>
    <alternativeName>
        <fullName evidence="1">Aspartyl-tRNA synthetase</fullName>
        <shortName evidence="1">AspRS</shortName>
    </alternativeName>
</protein>
<organism>
    <name type="scientific">Salmonella typhi</name>
    <dbReference type="NCBI Taxonomy" id="90370"/>
    <lineage>
        <taxon>Bacteria</taxon>
        <taxon>Pseudomonadati</taxon>
        <taxon>Pseudomonadota</taxon>
        <taxon>Gammaproteobacteria</taxon>
        <taxon>Enterobacterales</taxon>
        <taxon>Enterobacteriaceae</taxon>
        <taxon>Salmonella</taxon>
    </lineage>
</organism>
<sequence>MRTEYCGQLRLSHVGQQVTLCGWVNRRRDLGSLIFIDMRDREGIVQVFFDPDRADALKLASELRNEFCIQVTGTVRARDAKNVNADMATGEIEVLASSLTIINRADSLPLDANHVNTEEARLKYRYLDLRRPEMAQRLKTRAKITSLVRRFMDDHGFLDIETPMLTKATPEGARDYLVPSRVHKGKFYALPQSPQLFKQLLMMSGFDRYYQIVKCFRDEDLRADRQPEFTQIDVETSFMTAPQVREVMEALVRHLWLEVKGVDLGDFPVMTFAEAERRYGSDKPDLRNPMELVDVADLLKSVEFAVFAGPANDPKGRVAALRVPGGAQLSRKQIDDYGNFVKIYGAKGLAYIKVNERAKGLDGINSPVAKFLTADIVEAILERTGAQDGDMIFFGADNKKVVADALGALRLKLGKDLSLTDEDKWAPLWVIDFPMFEDDGEGGLTAMHHPFTAPRDMTASELKTAPEEAVANAYDMVINGYEVGGGSVRIHNGEMQQTVFGILGINEQEQREKFGFLLDALKYGTPPHVGLAFGLDRLTMLLTGTDNIRDVIAFPKTTAAACLMTEAPSFANQAALTELGIQVVKKAENN</sequence>
<gene>
    <name evidence="1" type="primary">aspS</name>
    <name type="ordered locus">STY2109</name>
    <name type="ordered locus">t0976</name>
</gene>
<name>SYD_SALTI</name>
<keyword id="KW-0030">Aminoacyl-tRNA synthetase</keyword>
<keyword id="KW-0067">ATP-binding</keyword>
<keyword id="KW-0963">Cytoplasm</keyword>
<keyword id="KW-0436">Ligase</keyword>
<keyword id="KW-0547">Nucleotide-binding</keyword>
<keyword id="KW-0648">Protein biosynthesis</keyword>
<reference key="1">
    <citation type="journal article" date="2001" name="Nature">
        <title>Complete genome sequence of a multiple drug resistant Salmonella enterica serovar Typhi CT18.</title>
        <authorList>
            <person name="Parkhill J."/>
            <person name="Dougan G."/>
            <person name="James K.D."/>
            <person name="Thomson N.R."/>
            <person name="Pickard D."/>
            <person name="Wain J."/>
            <person name="Churcher C.M."/>
            <person name="Mungall K.L."/>
            <person name="Bentley S.D."/>
            <person name="Holden M.T.G."/>
            <person name="Sebaihia M."/>
            <person name="Baker S."/>
            <person name="Basham D."/>
            <person name="Brooks K."/>
            <person name="Chillingworth T."/>
            <person name="Connerton P."/>
            <person name="Cronin A."/>
            <person name="Davis P."/>
            <person name="Davies R.M."/>
            <person name="Dowd L."/>
            <person name="White N."/>
            <person name="Farrar J."/>
            <person name="Feltwell T."/>
            <person name="Hamlin N."/>
            <person name="Haque A."/>
            <person name="Hien T.T."/>
            <person name="Holroyd S."/>
            <person name="Jagels K."/>
            <person name="Krogh A."/>
            <person name="Larsen T.S."/>
            <person name="Leather S."/>
            <person name="Moule S."/>
            <person name="O'Gaora P."/>
            <person name="Parry C."/>
            <person name="Quail M.A."/>
            <person name="Rutherford K.M."/>
            <person name="Simmonds M."/>
            <person name="Skelton J."/>
            <person name="Stevens K."/>
            <person name="Whitehead S."/>
            <person name="Barrell B.G."/>
        </authorList>
    </citation>
    <scope>NUCLEOTIDE SEQUENCE [LARGE SCALE GENOMIC DNA]</scope>
    <source>
        <strain>CT18</strain>
    </source>
</reference>
<reference key="2">
    <citation type="journal article" date="2003" name="J. Bacteriol.">
        <title>Comparative genomics of Salmonella enterica serovar Typhi strains Ty2 and CT18.</title>
        <authorList>
            <person name="Deng W."/>
            <person name="Liou S.-R."/>
            <person name="Plunkett G. III"/>
            <person name="Mayhew G.F."/>
            <person name="Rose D.J."/>
            <person name="Burland V."/>
            <person name="Kodoyianni V."/>
            <person name="Schwartz D.C."/>
            <person name="Blattner F.R."/>
        </authorList>
    </citation>
    <scope>NUCLEOTIDE SEQUENCE [LARGE SCALE GENOMIC DNA]</scope>
    <source>
        <strain>ATCC 700931 / Ty2</strain>
    </source>
</reference>
<accession>Q8Z5W1</accession>
<feature type="chain" id="PRO_0000110936" description="Aspartate--tRNA ligase">
    <location>
        <begin position="1"/>
        <end position="590"/>
    </location>
</feature>
<feature type="region of interest" description="Aspartate" evidence="1">
    <location>
        <begin position="195"/>
        <end position="198"/>
    </location>
</feature>
<feature type="binding site" evidence="1">
    <location>
        <position position="171"/>
    </location>
    <ligand>
        <name>L-aspartate</name>
        <dbReference type="ChEBI" id="CHEBI:29991"/>
    </ligand>
</feature>
<feature type="binding site" evidence="1">
    <location>
        <begin position="217"/>
        <end position="219"/>
    </location>
    <ligand>
        <name>ATP</name>
        <dbReference type="ChEBI" id="CHEBI:30616"/>
    </ligand>
</feature>
<feature type="binding site" evidence="1">
    <location>
        <position position="217"/>
    </location>
    <ligand>
        <name>L-aspartate</name>
        <dbReference type="ChEBI" id="CHEBI:29991"/>
    </ligand>
</feature>
<feature type="binding site" evidence="1">
    <location>
        <position position="226"/>
    </location>
    <ligand>
        <name>ATP</name>
        <dbReference type="ChEBI" id="CHEBI:30616"/>
    </ligand>
</feature>
<feature type="binding site" evidence="1">
    <location>
        <position position="448"/>
    </location>
    <ligand>
        <name>L-aspartate</name>
        <dbReference type="ChEBI" id="CHEBI:29991"/>
    </ligand>
</feature>
<feature type="binding site" evidence="1">
    <location>
        <position position="482"/>
    </location>
    <ligand>
        <name>ATP</name>
        <dbReference type="ChEBI" id="CHEBI:30616"/>
    </ligand>
</feature>
<feature type="binding site" evidence="1">
    <location>
        <position position="489"/>
    </location>
    <ligand>
        <name>L-aspartate</name>
        <dbReference type="ChEBI" id="CHEBI:29991"/>
    </ligand>
</feature>
<feature type="binding site" evidence="1">
    <location>
        <begin position="534"/>
        <end position="537"/>
    </location>
    <ligand>
        <name>ATP</name>
        <dbReference type="ChEBI" id="CHEBI:30616"/>
    </ligand>
</feature>
<proteinExistence type="inferred from homology"/>
<evidence type="ECO:0000255" key="1">
    <source>
        <dbReference type="HAMAP-Rule" id="MF_00044"/>
    </source>
</evidence>
<dbReference type="EC" id="6.1.1.12" evidence="1"/>
<dbReference type="EMBL" id="AL513382">
    <property type="protein sequence ID" value="CAD05652.1"/>
    <property type="molecule type" value="Genomic_DNA"/>
</dbReference>
<dbReference type="EMBL" id="AE014613">
    <property type="protein sequence ID" value="AAO68648.1"/>
    <property type="molecule type" value="Genomic_DNA"/>
</dbReference>
<dbReference type="RefSeq" id="NP_456468.1">
    <property type="nucleotide sequence ID" value="NC_003198.1"/>
</dbReference>
<dbReference type="RefSeq" id="WP_001258634.1">
    <property type="nucleotide sequence ID" value="NZ_WSUR01000004.1"/>
</dbReference>
<dbReference type="SMR" id="Q8Z5W1"/>
<dbReference type="STRING" id="220341.gene:17586017"/>
<dbReference type="KEGG" id="stt:t0976"/>
<dbReference type="KEGG" id="sty:STY2109"/>
<dbReference type="PATRIC" id="fig|220341.7.peg.2119"/>
<dbReference type="eggNOG" id="COG0173">
    <property type="taxonomic scope" value="Bacteria"/>
</dbReference>
<dbReference type="HOGENOM" id="CLU_014330_3_2_6"/>
<dbReference type="OMA" id="LCGWVDR"/>
<dbReference type="OrthoDB" id="9802326at2"/>
<dbReference type="Proteomes" id="UP000000541">
    <property type="component" value="Chromosome"/>
</dbReference>
<dbReference type="Proteomes" id="UP000002670">
    <property type="component" value="Chromosome"/>
</dbReference>
<dbReference type="GO" id="GO:0005737">
    <property type="term" value="C:cytoplasm"/>
    <property type="evidence" value="ECO:0007669"/>
    <property type="project" value="UniProtKB-SubCell"/>
</dbReference>
<dbReference type="GO" id="GO:0004815">
    <property type="term" value="F:aspartate-tRNA ligase activity"/>
    <property type="evidence" value="ECO:0007669"/>
    <property type="project" value="UniProtKB-UniRule"/>
</dbReference>
<dbReference type="GO" id="GO:0005524">
    <property type="term" value="F:ATP binding"/>
    <property type="evidence" value="ECO:0007669"/>
    <property type="project" value="UniProtKB-UniRule"/>
</dbReference>
<dbReference type="GO" id="GO:0003676">
    <property type="term" value="F:nucleic acid binding"/>
    <property type="evidence" value="ECO:0007669"/>
    <property type="project" value="InterPro"/>
</dbReference>
<dbReference type="GO" id="GO:0006422">
    <property type="term" value="P:aspartyl-tRNA aminoacylation"/>
    <property type="evidence" value="ECO:0007669"/>
    <property type="project" value="UniProtKB-UniRule"/>
</dbReference>
<dbReference type="CDD" id="cd00777">
    <property type="entry name" value="AspRS_core"/>
    <property type="match status" value="1"/>
</dbReference>
<dbReference type="CDD" id="cd04317">
    <property type="entry name" value="EcAspRS_like_N"/>
    <property type="match status" value="1"/>
</dbReference>
<dbReference type="FunFam" id="2.40.50.140:FF:000080">
    <property type="entry name" value="Aspartate--tRNA ligase"/>
    <property type="match status" value="1"/>
</dbReference>
<dbReference type="FunFam" id="3.30.1360.30:FF:000001">
    <property type="entry name" value="Aspartate--tRNA ligase"/>
    <property type="match status" value="1"/>
</dbReference>
<dbReference type="Gene3D" id="3.30.930.10">
    <property type="entry name" value="Bira Bifunctional Protein, Domain 2"/>
    <property type="match status" value="1"/>
</dbReference>
<dbReference type="Gene3D" id="3.30.1360.30">
    <property type="entry name" value="GAD-like domain"/>
    <property type="match status" value="1"/>
</dbReference>
<dbReference type="Gene3D" id="2.40.50.140">
    <property type="entry name" value="Nucleic acid-binding proteins"/>
    <property type="match status" value="1"/>
</dbReference>
<dbReference type="HAMAP" id="MF_00044">
    <property type="entry name" value="Asp_tRNA_synth_type1"/>
    <property type="match status" value="1"/>
</dbReference>
<dbReference type="InterPro" id="IPR004364">
    <property type="entry name" value="Aa-tRNA-synt_II"/>
</dbReference>
<dbReference type="InterPro" id="IPR006195">
    <property type="entry name" value="aa-tRNA-synth_II"/>
</dbReference>
<dbReference type="InterPro" id="IPR045864">
    <property type="entry name" value="aa-tRNA-synth_II/BPL/LPL"/>
</dbReference>
<dbReference type="InterPro" id="IPR004524">
    <property type="entry name" value="Asp-tRNA-ligase_1"/>
</dbReference>
<dbReference type="InterPro" id="IPR047089">
    <property type="entry name" value="Asp-tRNA-ligase_1_N"/>
</dbReference>
<dbReference type="InterPro" id="IPR002312">
    <property type="entry name" value="Asp/Asn-tRNA-synth_IIb"/>
</dbReference>
<dbReference type="InterPro" id="IPR047090">
    <property type="entry name" value="AspRS_core"/>
</dbReference>
<dbReference type="InterPro" id="IPR004115">
    <property type="entry name" value="GAD-like_sf"/>
</dbReference>
<dbReference type="InterPro" id="IPR029351">
    <property type="entry name" value="GAD_dom"/>
</dbReference>
<dbReference type="InterPro" id="IPR012340">
    <property type="entry name" value="NA-bd_OB-fold"/>
</dbReference>
<dbReference type="InterPro" id="IPR004365">
    <property type="entry name" value="NA-bd_OB_tRNA"/>
</dbReference>
<dbReference type="NCBIfam" id="TIGR00459">
    <property type="entry name" value="aspS_bact"/>
    <property type="match status" value="1"/>
</dbReference>
<dbReference type="NCBIfam" id="NF001750">
    <property type="entry name" value="PRK00476.1"/>
    <property type="match status" value="1"/>
</dbReference>
<dbReference type="PANTHER" id="PTHR22594:SF5">
    <property type="entry name" value="ASPARTATE--TRNA LIGASE, MITOCHONDRIAL"/>
    <property type="match status" value="1"/>
</dbReference>
<dbReference type="PANTHER" id="PTHR22594">
    <property type="entry name" value="ASPARTYL/LYSYL-TRNA SYNTHETASE"/>
    <property type="match status" value="1"/>
</dbReference>
<dbReference type="Pfam" id="PF02938">
    <property type="entry name" value="GAD"/>
    <property type="match status" value="1"/>
</dbReference>
<dbReference type="Pfam" id="PF00152">
    <property type="entry name" value="tRNA-synt_2"/>
    <property type="match status" value="1"/>
</dbReference>
<dbReference type="Pfam" id="PF01336">
    <property type="entry name" value="tRNA_anti-codon"/>
    <property type="match status" value="1"/>
</dbReference>
<dbReference type="PRINTS" id="PR01042">
    <property type="entry name" value="TRNASYNTHASP"/>
</dbReference>
<dbReference type="SUPFAM" id="SSF55681">
    <property type="entry name" value="Class II aaRS and biotin synthetases"/>
    <property type="match status" value="1"/>
</dbReference>
<dbReference type="SUPFAM" id="SSF55261">
    <property type="entry name" value="GAD domain-like"/>
    <property type="match status" value="1"/>
</dbReference>
<dbReference type="SUPFAM" id="SSF50249">
    <property type="entry name" value="Nucleic acid-binding proteins"/>
    <property type="match status" value="1"/>
</dbReference>
<dbReference type="PROSITE" id="PS50862">
    <property type="entry name" value="AA_TRNA_LIGASE_II"/>
    <property type="match status" value="1"/>
</dbReference>